<name>RRG9_ARTBC</name>
<organism>
    <name type="scientific">Arthroderma benhamiae (strain ATCC MYA-4681 / CBS 112371)</name>
    <name type="common">Trichophyton mentagrophytes</name>
    <dbReference type="NCBI Taxonomy" id="663331"/>
    <lineage>
        <taxon>Eukaryota</taxon>
        <taxon>Fungi</taxon>
        <taxon>Dikarya</taxon>
        <taxon>Ascomycota</taxon>
        <taxon>Pezizomycotina</taxon>
        <taxon>Eurotiomycetes</taxon>
        <taxon>Eurotiomycetidae</taxon>
        <taxon>Onygenales</taxon>
        <taxon>Arthrodermataceae</taxon>
        <taxon>Trichophyton</taxon>
    </lineage>
</organism>
<feature type="transit peptide" description="Mitochondrion" evidence="2">
    <location>
        <begin position="1"/>
        <end position="27"/>
    </location>
</feature>
<feature type="chain" id="PRO_0000407933" description="Required for respiratory growth protein 9, mitochondrial">
    <location>
        <begin position="28"/>
        <end position="316"/>
    </location>
</feature>
<feature type="region of interest" description="Disordered" evidence="3">
    <location>
        <begin position="80"/>
        <end position="105"/>
    </location>
</feature>
<feature type="region of interest" description="Disordered" evidence="3">
    <location>
        <begin position="197"/>
        <end position="316"/>
    </location>
</feature>
<feature type="compositionally biased region" description="Basic and acidic residues" evidence="3">
    <location>
        <begin position="201"/>
        <end position="213"/>
    </location>
</feature>
<feature type="compositionally biased region" description="Basic and acidic residues" evidence="3">
    <location>
        <begin position="241"/>
        <end position="263"/>
    </location>
</feature>
<feature type="compositionally biased region" description="Basic and acidic residues" evidence="3">
    <location>
        <begin position="272"/>
        <end position="290"/>
    </location>
</feature>
<feature type="compositionally biased region" description="Basic and acidic residues" evidence="3">
    <location>
        <begin position="302"/>
        <end position="316"/>
    </location>
</feature>
<proteinExistence type="inferred from homology"/>
<comment type="function">
    <text evidence="1">Required for respiratory activity and maintenance and expression of the mitochondrial genome.</text>
</comment>
<comment type="subcellular location">
    <subcellularLocation>
        <location evidence="1">Mitochondrion</location>
    </subcellularLocation>
</comment>
<comment type="similarity">
    <text evidence="4">Belongs to the RRG9 family.</text>
</comment>
<keyword id="KW-0496">Mitochondrion</keyword>
<keyword id="KW-1185">Reference proteome</keyword>
<keyword id="KW-0809">Transit peptide</keyword>
<accession>D4AKN8</accession>
<protein>
    <recommendedName>
        <fullName>Required for respiratory growth protein 9, mitochondrial</fullName>
    </recommendedName>
</protein>
<gene>
    <name type="primary">RRG9</name>
    <name type="ORF">ARB_04881</name>
</gene>
<evidence type="ECO:0000250" key="1"/>
<evidence type="ECO:0000255" key="2"/>
<evidence type="ECO:0000256" key="3">
    <source>
        <dbReference type="SAM" id="MobiDB-lite"/>
    </source>
</evidence>
<evidence type="ECO:0000305" key="4"/>
<reference key="1">
    <citation type="journal article" date="2011" name="Genome Biol.">
        <title>Comparative and functional genomics provide insights into the pathogenicity of dermatophytic fungi.</title>
        <authorList>
            <person name="Burmester A."/>
            <person name="Shelest E."/>
            <person name="Gloeckner G."/>
            <person name="Heddergott C."/>
            <person name="Schindler S."/>
            <person name="Staib P."/>
            <person name="Heidel A."/>
            <person name="Felder M."/>
            <person name="Petzold A."/>
            <person name="Szafranski K."/>
            <person name="Feuermann M."/>
            <person name="Pedruzzi I."/>
            <person name="Priebe S."/>
            <person name="Groth M."/>
            <person name="Winkler R."/>
            <person name="Li W."/>
            <person name="Kniemeyer O."/>
            <person name="Schroeckh V."/>
            <person name="Hertweck C."/>
            <person name="Hube B."/>
            <person name="White T.C."/>
            <person name="Platzer M."/>
            <person name="Guthke R."/>
            <person name="Heitman J."/>
            <person name="Woestemeyer J."/>
            <person name="Zipfel P.F."/>
            <person name="Monod M."/>
            <person name="Brakhage A.A."/>
        </authorList>
    </citation>
    <scope>NUCLEOTIDE SEQUENCE [LARGE SCALE GENOMIC DNA]</scope>
    <source>
        <strain>ATCC MYA-4681 / CBS 112371</strain>
    </source>
</reference>
<dbReference type="EMBL" id="ABSU01000002">
    <property type="protein sequence ID" value="EFE35947.1"/>
    <property type="molecule type" value="Genomic_DNA"/>
</dbReference>
<dbReference type="RefSeq" id="XP_003016592.1">
    <property type="nucleotide sequence ID" value="XM_003016546.1"/>
</dbReference>
<dbReference type="SMR" id="D4AKN8"/>
<dbReference type="GeneID" id="9522074"/>
<dbReference type="KEGG" id="abe:ARB_04881"/>
<dbReference type="eggNOG" id="ENOG502S7IA">
    <property type="taxonomic scope" value="Eukaryota"/>
</dbReference>
<dbReference type="HOGENOM" id="CLU_933757_0_0_1"/>
<dbReference type="OMA" id="SKWRATE"/>
<dbReference type="OrthoDB" id="5578174at2759"/>
<dbReference type="Proteomes" id="UP000008866">
    <property type="component" value="Unassembled WGS sequence"/>
</dbReference>
<dbReference type="GO" id="GO:0005739">
    <property type="term" value="C:mitochondrion"/>
    <property type="evidence" value="ECO:0007669"/>
    <property type="project" value="UniProtKB-SubCell"/>
</dbReference>
<dbReference type="GO" id="GO:0005634">
    <property type="term" value="C:nucleus"/>
    <property type="evidence" value="ECO:0007669"/>
    <property type="project" value="TreeGrafter"/>
</dbReference>
<dbReference type="InterPro" id="IPR010487">
    <property type="entry name" value="NGRN/Rrg9"/>
</dbReference>
<dbReference type="PANTHER" id="PTHR13475">
    <property type="entry name" value="NEUGRIN"/>
    <property type="match status" value="1"/>
</dbReference>
<dbReference type="PANTHER" id="PTHR13475:SF3">
    <property type="entry name" value="NEUGRIN"/>
    <property type="match status" value="1"/>
</dbReference>
<dbReference type="Pfam" id="PF06413">
    <property type="entry name" value="Neugrin"/>
    <property type="match status" value="1"/>
</dbReference>
<sequence>MSSQPLTAANIFAVLRHLRSLCHPTRPVTTASFASSIASQITPSRAYNNYTPTHYTPLSIPKNSALKQWHFVASYSTVPPAKTEKETTEDTSLSKSTKPKPKKPLPAWAVQKNALKEKFKEGWKPRKKVSPDTMESIRKLHSMDSVKFSTKNLAEEFKISPEAIRRILKSKWRATEAEEIDRRNRWEKRKIRIQEQMMELGLRHTDPTSKDDPSAEEVLSQRHYSSNAIEDLSGEYPPQNRRREGIPQKRIVPEDNSSRKFDPWEVTADDLLGTKRDSFRDNWSKEDSPKARSSSSQRHPRRIEYNERSYKEKPDW</sequence>